<evidence type="ECO:0000250" key="1"/>
<evidence type="ECO:0000255" key="2">
    <source>
        <dbReference type="HAMAP-Rule" id="MF_00445"/>
    </source>
</evidence>
<name>NU2C2_ORYSI</name>
<gene>
    <name evidence="2" type="primary">ndhB2</name>
</gene>
<proteinExistence type="inferred from homology"/>
<feature type="chain" id="PRO_0000391298" description="NAD(P)H-quinone oxidoreductase subunit 2 B, chloroplastic">
    <location>
        <begin position="1"/>
        <end position="510"/>
    </location>
</feature>
<feature type="transmembrane region" description="Helical" evidence="2">
    <location>
        <begin position="31"/>
        <end position="51"/>
    </location>
</feature>
<feature type="transmembrane region" description="Helical" evidence="2">
    <location>
        <begin position="59"/>
        <end position="79"/>
    </location>
</feature>
<feature type="transmembrane region" description="Helical" evidence="2">
    <location>
        <begin position="99"/>
        <end position="119"/>
    </location>
</feature>
<feature type="transmembrane region" description="Helical" evidence="2">
    <location>
        <begin position="124"/>
        <end position="144"/>
    </location>
</feature>
<feature type="transmembrane region" description="Helical" evidence="2">
    <location>
        <begin position="149"/>
        <end position="169"/>
    </location>
</feature>
<feature type="transmembrane region" description="Helical" evidence="2">
    <location>
        <begin position="184"/>
        <end position="204"/>
    </location>
</feature>
<feature type="transmembrane region" description="Helical" evidence="2">
    <location>
        <begin position="229"/>
        <end position="249"/>
    </location>
</feature>
<feature type="transmembrane region" description="Helical" evidence="2">
    <location>
        <begin position="261"/>
        <end position="281"/>
    </location>
</feature>
<feature type="transmembrane region" description="Helical" evidence="2">
    <location>
        <begin position="295"/>
        <end position="315"/>
    </location>
</feature>
<feature type="transmembrane region" description="Helical" evidence="2">
    <location>
        <begin position="323"/>
        <end position="343"/>
    </location>
</feature>
<feature type="transmembrane region" description="Helical" evidence="2">
    <location>
        <begin position="354"/>
        <end position="374"/>
    </location>
</feature>
<feature type="transmembrane region" description="Helical" evidence="2">
    <location>
        <begin position="395"/>
        <end position="415"/>
    </location>
</feature>
<feature type="transmembrane region" description="Helical" evidence="2">
    <location>
        <begin position="418"/>
        <end position="438"/>
    </location>
</feature>
<feature type="transmembrane region" description="Helical" evidence="2">
    <location>
        <begin position="484"/>
        <end position="504"/>
    </location>
</feature>
<geneLocation type="chloroplast"/>
<reference key="1">
    <citation type="journal article" date="2004" name="Plant Physiol.">
        <title>A comparison of rice chloroplast genomes.</title>
        <authorList>
            <person name="Tang J."/>
            <person name="Xia H."/>
            <person name="Cao M."/>
            <person name="Zhang X."/>
            <person name="Zeng W."/>
            <person name="Hu S."/>
            <person name="Tong W."/>
            <person name="Wang J."/>
            <person name="Wang J."/>
            <person name="Yu J."/>
            <person name="Yang H."/>
            <person name="Zhu L."/>
        </authorList>
    </citation>
    <scope>NUCLEOTIDE SEQUENCE [LARGE SCALE GENOMIC DNA]</scope>
    <source>
        <strain>cv. 93-11</strain>
    </source>
</reference>
<protein>
    <recommendedName>
        <fullName evidence="2">NAD(P)H-quinone oxidoreductase subunit 2 B, chloroplastic</fullName>
        <ecNumber evidence="2">7.1.1.-</ecNumber>
    </recommendedName>
    <alternativeName>
        <fullName evidence="2">NAD(P)H dehydrogenase, subunit 2 B</fullName>
    </alternativeName>
    <alternativeName>
        <fullName evidence="2">NADH-plastoquinone oxidoreductase subunit 2 B</fullName>
    </alternativeName>
</protein>
<keyword id="KW-0150">Chloroplast</keyword>
<keyword id="KW-0472">Membrane</keyword>
<keyword id="KW-0520">NAD</keyword>
<keyword id="KW-0521">NADP</keyword>
<keyword id="KW-0934">Plastid</keyword>
<keyword id="KW-0618">Plastoquinone</keyword>
<keyword id="KW-0874">Quinone</keyword>
<keyword id="KW-1185">Reference proteome</keyword>
<keyword id="KW-0691">RNA editing</keyword>
<keyword id="KW-0793">Thylakoid</keyword>
<keyword id="KW-1278">Translocase</keyword>
<keyword id="KW-0812">Transmembrane</keyword>
<keyword id="KW-1133">Transmembrane helix</keyword>
<keyword id="KW-0813">Transport</keyword>
<comment type="function">
    <text evidence="2">NDH shuttles electrons from NAD(P)H:plastoquinone, via FMN and iron-sulfur (Fe-S) centers, to quinones in the photosynthetic chain and possibly in a chloroplast respiratory chain. The immediate electron acceptor for the enzyme in this species is believed to be plastoquinone. Couples the redox reaction to proton translocation, and thus conserves the redox energy in a proton gradient.</text>
</comment>
<comment type="catalytic activity">
    <reaction evidence="2">
        <text>a plastoquinone + NADH + (n+1) H(+)(in) = a plastoquinol + NAD(+) + n H(+)(out)</text>
        <dbReference type="Rhea" id="RHEA:42608"/>
        <dbReference type="Rhea" id="RHEA-COMP:9561"/>
        <dbReference type="Rhea" id="RHEA-COMP:9562"/>
        <dbReference type="ChEBI" id="CHEBI:15378"/>
        <dbReference type="ChEBI" id="CHEBI:17757"/>
        <dbReference type="ChEBI" id="CHEBI:57540"/>
        <dbReference type="ChEBI" id="CHEBI:57945"/>
        <dbReference type="ChEBI" id="CHEBI:62192"/>
    </reaction>
</comment>
<comment type="catalytic activity">
    <reaction evidence="2">
        <text>a plastoquinone + NADPH + (n+1) H(+)(in) = a plastoquinol + NADP(+) + n H(+)(out)</text>
        <dbReference type="Rhea" id="RHEA:42612"/>
        <dbReference type="Rhea" id="RHEA-COMP:9561"/>
        <dbReference type="Rhea" id="RHEA-COMP:9562"/>
        <dbReference type="ChEBI" id="CHEBI:15378"/>
        <dbReference type="ChEBI" id="CHEBI:17757"/>
        <dbReference type="ChEBI" id="CHEBI:57783"/>
        <dbReference type="ChEBI" id="CHEBI:58349"/>
        <dbReference type="ChEBI" id="CHEBI:62192"/>
    </reaction>
</comment>
<comment type="subunit">
    <text evidence="2">NDH is composed of at least 16 different subunits, 5 of which are encoded in the nucleus.</text>
</comment>
<comment type="subcellular location">
    <subcellularLocation>
        <location evidence="2">Plastid</location>
        <location evidence="2">Chloroplast thylakoid membrane</location>
        <topology evidence="2">Multi-pass membrane protein</topology>
    </subcellularLocation>
</comment>
<comment type="RNA editing">
    <location>
        <position position="156" evidence="1"/>
    </location>
    <location>
        <position position="196" evidence="1"/>
    </location>
    <location>
        <position position="204" evidence="1"/>
    </location>
    <location>
        <position position="235" evidence="1"/>
    </location>
    <location>
        <position position="246" evidence="1"/>
    </location>
    <location>
        <position position="277" evidence="1"/>
    </location>
    <location>
        <position position="279" evidence="1"/>
    </location>
    <location>
        <position position="494" evidence="1"/>
    </location>
</comment>
<comment type="similarity">
    <text evidence="2">Belongs to the complex I subunit 2 family.</text>
</comment>
<accession>P0CD21</accession>
<accession>P0C347</accession>
<sequence>MIWHVQNENFILDSTRIFMKAFHLLLFQGSFIFPECILIFGLILLLMIDLTSDQKDRPWFYFISSTSLVISITALLFRWREEPIISFSGNFQTNNFNEIFQFLILLCSTLCIPLSVEYIECTEMAITEFLLFVLTATLGGMFLCGANDLITIFVALECFSLCSYLLSGYTKRDLRSNEATMKYLLMGGASSSILVYGFSWLYGLSGGEIELQEIVNGLINTQMYNSPGISIALIFITVGLGFKLSLAPFHQWTPDVYEGSPTPVVAFLSVTSKVAALALATRILDIPFYFSSNEWHLLLEILAILSMILGNLLAITQTSMKRMLAYSSIGQIGYVIIGIIVGDSNDGYASMITYMLFYISMNLGTFACIVLFGLRTGTDNIRDYAGLYTKDPFLALSLALCLLSLGGLPPLAGFFGKLYLFWCGWQAGLYFLVSIGLLTSVLSIYYYLKIVKLLMTGRNQEITPYVRNYRRSPLRSNNSIELSMTVCVIASTILGISMNPILAIAQDTLF</sequence>
<organism>
    <name type="scientific">Oryza sativa subsp. indica</name>
    <name type="common">Rice</name>
    <dbReference type="NCBI Taxonomy" id="39946"/>
    <lineage>
        <taxon>Eukaryota</taxon>
        <taxon>Viridiplantae</taxon>
        <taxon>Streptophyta</taxon>
        <taxon>Embryophyta</taxon>
        <taxon>Tracheophyta</taxon>
        <taxon>Spermatophyta</taxon>
        <taxon>Magnoliopsida</taxon>
        <taxon>Liliopsida</taxon>
        <taxon>Poales</taxon>
        <taxon>Poaceae</taxon>
        <taxon>BOP clade</taxon>
        <taxon>Oryzoideae</taxon>
        <taxon>Oryzeae</taxon>
        <taxon>Oryzinae</taxon>
        <taxon>Oryza</taxon>
        <taxon>Oryza sativa</taxon>
    </lineage>
</organism>
<dbReference type="EC" id="7.1.1.-" evidence="2"/>
<dbReference type="EMBL" id="AY522329">
    <property type="status" value="NOT_ANNOTATED_CDS"/>
    <property type="molecule type" value="Genomic_DNA"/>
</dbReference>
<dbReference type="SMR" id="P0CD21"/>
<dbReference type="STRING" id="39946.P0CD21"/>
<dbReference type="Proteomes" id="UP000007015">
    <property type="component" value="Chloroplast"/>
</dbReference>
<dbReference type="GO" id="GO:0009535">
    <property type="term" value="C:chloroplast thylakoid membrane"/>
    <property type="evidence" value="ECO:0007669"/>
    <property type="project" value="UniProtKB-SubCell"/>
</dbReference>
<dbReference type="GO" id="GO:0008137">
    <property type="term" value="F:NADH dehydrogenase (ubiquinone) activity"/>
    <property type="evidence" value="ECO:0007669"/>
    <property type="project" value="InterPro"/>
</dbReference>
<dbReference type="GO" id="GO:0048038">
    <property type="term" value="F:quinone binding"/>
    <property type="evidence" value="ECO:0007669"/>
    <property type="project" value="UniProtKB-KW"/>
</dbReference>
<dbReference type="GO" id="GO:0042773">
    <property type="term" value="P:ATP synthesis coupled electron transport"/>
    <property type="evidence" value="ECO:0007669"/>
    <property type="project" value="InterPro"/>
</dbReference>
<dbReference type="GO" id="GO:0019684">
    <property type="term" value="P:photosynthesis, light reaction"/>
    <property type="evidence" value="ECO:0007669"/>
    <property type="project" value="UniProtKB-UniRule"/>
</dbReference>
<dbReference type="HAMAP" id="MF_00445">
    <property type="entry name" value="NDH1_NuoN_1"/>
    <property type="match status" value="1"/>
</dbReference>
<dbReference type="InterPro" id="IPR010096">
    <property type="entry name" value="NADH-Q_OxRdtase_suN/2"/>
</dbReference>
<dbReference type="InterPro" id="IPR001750">
    <property type="entry name" value="ND/Mrp_TM"/>
</dbReference>
<dbReference type="InterPro" id="IPR045693">
    <property type="entry name" value="Ndh2_N"/>
</dbReference>
<dbReference type="NCBIfam" id="TIGR01770">
    <property type="entry name" value="NDH_I_N"/>
    <property type="match status" value="1"/>
</dbReference>
<dbReference type="NCBIfam" id="NF002701">
    <property type="entry name" value="PRK02504.1"/>
    <property type="match status" value="1"/>
</dbReference>
<dbReference type="PANTHER" id="PTHR22773">
    <property type="entry name" value="NADH DEHYDROGENASE"/>
    <property type="match status" value="1"/>
</dbReference>
<dbReference type="Pfam" id="PF19530">
    <property type="entry name" value="Ndh2_N"/>
    <property type="match status" value="1"/>
</dbReference>
<dbReference type="Pfam" id="PF00361">
    <property type="entry name" value="Proton_antipo_M"/>
    <property type="match status" value="1"/>
</dbReference>
<dbReference type="PRINTS" id="PR01434">
    <property type="entry name" value="NADHDHGNASE5"/>
</dbReference>